<feature type="chain" id="PRO_1000149714" description="Phosphoenolpyruvate synthase regulatory protein">
    <location>
        <begin position="1"/>
        <end position="277"/>
    </location>
</feature>
<feature type="binding site" evidence="1">
    <location>
        <begin position="157"/>
        <end position="164"/>
    </location>
    <ligand>
        <name>ADP</name>
        <dbReference type="ChEBI" id="CHEBI:456216"/>
    </ligand>
</feature>
<evidence type="ECO:0000255" key="1">
    <source>
        <dbReference type="HAMAP-Rule" id="MF_01062"/>
    </source>
</evidence>
<name>PSRP_SALPC</name>
<organism>
    <name type="scientific">Salmonella paratyphi C (strain RKS4594)</name>
    <dbReference type="NCBI Taxonomy" id="476213"/>
    <lineage>
        <taxon>Bacteria</taxon>
        <taxon>Pseudomonadati</taxon>
        <taxon>Pseudomonadota</taxon>
        <taxon>Gammaproteobacteria</taxon>
        <taxon>Enterobacterales</taxon>
        <taxon>Enterobacteriaceae</taxon>
        <taxon>Salmonella</taxon>
    </lineage>
</organism>
<accession>C0Q632</accession>
<protein>
    <recommendedName>
        <fullName evidence="1">Phosphoenolpyruvate synthase regulatory protein</fullName>
        <shortName evidence="1">PEP synthase regulatory protein</shortName>
        <shortName evidence="1">PSRP</shortName>
        <ecNumber evidence="1">2.7.11.33</ecNumber>
        <ecNumber evidence="1">2.7.4.28</ecNumber>
    </recommendedName>
    <alternativeName>
        <fullName evidence="1">Pyruvate, water dikinase regulatory protein</fullName>
    </alternativeName>
</protein>
<dbReference type="EC" id="2.7.11.33" evidence="1"/>
<dbReference type="EC" id="2.7.4.28" evidence="1"/>
<dbReference type="EMBL" id="CP000857">
    <property type="protein sequence ID" value="ACN46498.1"/>
    <property type="molecule type" value="Genomic_DNA"/>
</dbReference>
<dbReference type="RefSeq" id="WP_000370992.1">
    <property type="nucleotide sequence ID" value="NC_012125.1"/>
</dbReference>
<dbReference type="SMR" id="C0Q632"/>
<dbReference type="KEGG" id="sei:SPC_2383"/>
<dbReference type="HOGENOM" id="CLU_046206_1_0_6"/>
<dbReference type="Proteomes" id="UP000001599">
    <property type="component" value="Chromosome"/>
</dbReference>
<dbReference type="GO" id="GO:0043531">
    <property type="term" value="F:ADP binding"/>
    <property type="evidence" value="ECO:0007669"/>
    <property type="project" value="UniProtKB-UniRule"/>
</dbReference>
<dbReference type="GO" id="GO:0005524">
    <property type="term" value="F:ATP binding"/>
    <property type="evidence" value="ECO:0007669"/>
    <property type="project" value="InterPro"/>
</dbReference>
<dbReference type="GO" id="GO:0016776">
    <property type="term" value="F:phosphotransferase activity, phosphate group as acceptor"/>
    <property type="evidence" value="ECO:0007669"/>
    <property type="project" value="UniProtKB-UniRule"/>
</dbReference>
<dbReference type="GO" id="GO:0004674">
    <property type="term" value="F:protein serine/threonine kinase activity"/>
    <property type="evidence" value="ECO:0007669"/>
    <property type="project" value="UniProtKB-UniRule"/>
</dbReference>
<dbReference type="HAMAP" id="MF_01062">
    <property type="entry name" value="PSRP"/>
    <property type="match status" value="1"/>
</dbReference>
<dbReference type="InterPro" id="IPR005177">
    <property type="entry name" value="Kinase-pyrophosphorylase"/>
</dbReference>
<dbReference type="InterPro" id="IPR026530">
    <property type="entry name" value="PSRP"/>
</dbReference>
<dbReference type="NCBIfam" id="NF003742">
    <property type="entry name" value="PRK05339.1"/>
    <property type="match status" value="1"/>
</dbReference>
<dbReference type="PANTHER" id="PTHR31756">
    <property type="entry name" value="PYRUVATE, PHOSPHATE DIKINASE REGULATORY PROTEIN 1, CHLOROPLASTIC"/>
    <property type="match status" value="1"/>
</dbReference>
<dbReference type="PANTHER" id="PTHR31756:SF3">
    <property type="entry name" value="PYRUVATE, PHOSPHATE DIKINASE REGULATORY PROTEIN 1, CHLOROPLASTIC"/>
    <property type="match status" value="1"/>
</dbReference>
<dbReference type="Pfam" id="PF03618">
    <property type="entry name" value="Kinase-PPPase"/>
    <property type="match status" value="1"/>
</dbReference>
<reference key="1">
    <citation type="journal article" date="2009" name="PLoS ONE">
        <title>Salmonella paratyphi C: genetic divergence from Salmonella choleraesuis and pathogenic convergence with Salmonella typhi.</title>
        <authorList>
            <person name="Liu W.-Q."/>
            <person name="Feng Y."/>
            <person name="Wang Y."/>
            <person name="Zou Q.-H."/>
            <person name="Chen F."/>
            <person name="Guo J.-T."/>
            <person name="Peng Y.-H."/>
            <person name="Jin Y."/>
            <person name="Li Y.-G."/>
            <person name="Hu S.-N."/>
            <person name="Johnston R.N."/>
            <person name="Liu G.-R."/>
            <person name="Liu S.-L."/>
        </authorList>
    </citation>
    <scope>NUCLEOTIDE SEQUENCE [LARGE SCALE GENOMIC DNA]</scope>
    <source>
        <strain>RKS4594</strain>
    </source>
</reference>
<gene>
    <name evidence="1" type="primary">ppsR</name>
    <name type="ordered locus">SPC_2383</name>
</gene>
<comment type="function">
    <text evidence="1">Bifunctional serine/threonine kinase and phosphorylase involved in the regulation of the phosphoenolpyruvate synthase (PEPS) by catalyzing its phosphorylation/dephosphorylation.</text>
</comment>
<comment type="catalytic activity">
    <reaction evidence="1">
        <text>[pyruvate, water dikinase] + ADP = [pyruvate, water dikinase]-phosphate + AMP + H(+)</text>
        <dbReference type="Rhea" id="RHEA:46020"/>
        <dbReference type="Rhea" id="RHEA-COMP:11425"/>
        <dbReference type="Rhea" id="RHEA-COMP:11426"/>
        <dbReference type="ChEBI" id="CHEBI:15378"/>
        <dbReference type="ChEBI" id="CHEBI:43176"/>
        <dbReference type="ChEBI" id="CHEBI:68546"/>
        <dbReference type="ChEBI" id="CHEBI:456215"/>
        <dbReference type="ChEBI" id="CHEBI:456216"/>
        <dbReference type="EC" id="2.7.11.33"/>
    </reaction>
</comment>
<comment type="catalytic activity">
    <reaction evidence="1">
        <text>[pyruvate, water dikinase]-phosphate + phosphate + H(+) = [pyruvate, water dikinase] + diphosphate</text>
        <dbReference type="Rhea" id="RHEA:48580"/>
        <dbReference type="Rhea" id="RHEA-COMP:11425"/>
        <dbReference type="Rhea" id="RHEA-COMP:11426"/>
        <dbReference type="ChEBI" id="CHEBI:15378"/>
        <dbReference type="ChEBI" id="CHEBI:33019"/>
        <dbReference type="ChEBI" id="CHEBI:43176"/>
        <dbReference type="ChEBI" id="CHEBI:43474"/>
        <dbReference type="ChEBI" id="CHEBI:68546"/>
        <dbReference type="EC" id="2.7.4.28"/>
    </reaction>
</comment>
<comment type="similarity">
    <text evidence="1">Belongs to the pyruvate, phosphate/water dikinase regulatory protein family. PSRP subfamily.</text>
</comment>
<sequence>MDNVVDRHVFYISDGTAITAEVLGHAVMSQFPVTISSITLPFVENESRARAVKDQIDAIYQQTGVRPLVFYSIVLPEIRAIILQSEGFCQDIVQALVAPLQQEMKLDPTPIAHRTHGLNPGNLNKYDARIAAIDYTLAHDDGISLRNLDQAQVILLGVSRCGKTPTSLYLAMQFGIRAANYPFIADDMDNLTLPTSLKPLQHKLFGLTIDPERLAAIREERRENSRYASLRQCRMEVAEVEALYRKNQIPCLNSTNYSVEEIATKILDIMGLNRRMY</sequence>
<proteinExistence type="inferred from homology"/>
<keyword id="KW-0418">Kinase</keyword>
<keyword id="KW-0547">Nucleotide-binding</keyword>
<keyword id="KW-0723">Serine/threonine-protein kinase</keyword>
<keyword id="KW-0808">Transferase</keyword>